<reference key="1">
    <citation type="journal article" date="2010" name="PLoS ONE">
        <title>Genome sequence of Cronobacter sakazakii BAA-894 and comparative genomic hybridization analysis with other Cronobacter species.</title>
        <authorList>
            <person name="Kucerova E."/>
            <person name="Clifton S.W."/>
            <person name="Xia X.Q."/>
            <person name="Long F."/>
            <person name="Porwollik S."/>
            <person name="Fulton L."/>
            <person name="Fronick C."/>
            <person name="Minx P."/>
            <person name="Kyung K."/>
            <person name="Warren W."/>
            <person name="Fulton R."/>
            <person name="Feng D."/>
            <person name="Wollam A."/>
            <person name="Shah N."/>
            <person name="Bhonagiri V."/>
            <person name="Nash W.E."/>
            <person name="Hallsworth-Pepin K."/>
            <person name="Wilson R.K."/>
            <person name="McClelland M."/>
            <person name="Forsythe S.J."/>
        </authorList>
    </citation>
    <scope>NUCLEOTIDE SEQUENCE [LARGE SCALE GENOMIC DNA]</scope>
    <source>
        <strain>ATCC BAA-894</strain>
    </source>
</reference>
<accession>A7MQD5</accession>
<proteinExistence type="inferred from homology"/>
<comment type="subcellular location">
    <subcellularLocation>
        <location evidence="1">Cell inner membrane</location>
        <topology evidence="1">Multi-pass membrane protein</topology>
    </subcellularLocation>
</comment>
<comment type="similarity">
    <text evidence="1">Belongs to the UPF0761 family.</text>
</comment>
<dbReference type="EMBL" id="CP000783">
    <property type="protein sequence ID" value="ABU79243.1"/>
    <property type="molecule type" value="Genomic_DNA"/>
</dbReference>
<dbReference type="RefSeq" id="WP_012126223.1">
    <property type="nucleotide sequence ID" value="NC_009778.1"/>
</dbReference>
<dbReference type="SMR" id="A7MQD5"/>
<dbReference type="KEGG" id="esa:ESA_04062"/>
<dbReference type="PATRIC" id="fig|290339.8.peg.3608"/>
<dbReference type="HOGENOM" id="CLU_032288_0_0_6"/>
<dbReference type="Proteomes" id="UP000000260">
    <property type="component" value="Chromosome"/>
</dbReference>
<dbReference type="GO" id="GO:0005886">
    <property type="term" value="C:plasma membrane"/>
    <property type="evidence" value="ECO:0007669"/>
    <property type="project" value="UniProtKB-SubCell"/>
</dbReference>
<dbReference type="HAMAP" id="MF_00672">
    <property type="entry name" value="UPF0761"/>
    <property type="match status" value="1"/>
</dbReference>
<dbReference type="InterPro" id="IPR023679">
    <property type="entry name" value="UPF0761_bac"/>
</dbReference>
<dbReference type="InterPro" id="IPR017039">
    <property type="entry name" value="Virul_fac_BrkB"/>
</dbReference>
<dbReference type="NCBIfam" id="NF002457">
    <property type="entry name" value="PRK01637.1"/>
    <property type="match status" value="1"/>
</dbReference>
<dbReference type="NCBIfam" id="TIGR00765">
    <property type="entry name" value="yihY_not_rbn"/>
    <property type="match status" value="1"/>
</dbReference>
<dbReference type="PANTHER" id="PTHR30213">
    <property type="entry name" value="INNER MEMBRANE PROTEIN YHJD"/>
    <property type="match status" value="1"/>
</dbReference>
<dbReference type="PANTHER" id="PTHR30213:SF0">
    <property type="entry name" value="UPF0761 MEMBRANE PROTEIN YIHY"/>
    <property type="match status" value="1"/>
</dbReference>
<dbReference type="Pfam" id="PF03631">
    <property type="entry name" value="Virul_fac_BrkB"/>
    <property type="match status" value="1"/>
</dbReference>
<dbReference type="PIRSF" id="PIRSF035875">
    <property type="entry name" value="RNase_BN"/>
    <property type="match status" value="1"/>
</dbReference>
<feature type="chain" id="PRO_1000044716" description="UPF0761 membrane protein ESA_04062">
    <location>
        <begin position="1"/>
        <end position="289"/>
    </location>
</feature>
<feature type="transmembrane region" description="Helical" evidence="1">
    <location>
        <begin position="44"/>
        <end position="64"/>
    </location>
</feature>
<feature type="transmembrane region" description="Helical" evidence="1">
    <location>
        <begin position="104"/>
        <end position="124"/>
    </location>
</feature>
<feature type="transmembrane region" description="Helical" evidence="1">
    <location>
        <begin position="140"/>
        <end position="160"/>
    </location>
</feature>
<feature type="transmembrane region" description="Helical" evidence="1">
    <location>
        <begin position="183"/>
        <end position="203"/>
    </location>
</feature>
<feature type="transmembrane region" description="Helical" evidence="1">
    <location>
        <begin position="215"/>
        <end position="235"/>
    </location>
</feature>
<feature type="transmembrane region" description="Helical" evidence="1">
    <location>
        <begin position="244"/>
        <end position="264"/>
    </location>
</feature>
<evidence type="ECO:0000255" key="1">
    <source>
        <dbReference type="HAMAP-Rule" id="MF_00672"/>
    </source>
</evidence>
<keyword id="KW-0997">Cell inner membrane</keyword>
<keyword id="KW-1003">Cell membrane</keyword>
<keyword id="KW-0472">Membrane</keyword>
<keyword id="KW-1185">Reference proteome</keyword>
<keyword id="KW-0812">Transmembrane</keyword>
<keyword id="KW-1133">Transmembrane helix</keyword>
<sequence length="289" mass="32531">MLKSVHQKVARRTGPLLAWLKLLWVRIDEDHMTTLAGNLAYVSLLSLVPFVAVIFALFAAFPMFSDVSVQLRHFVFANFMPATGDIIQRYIEQFVANSSKMTAVGALGLIVTSLLLMYAIDSALNTIWRSTRQRPKVYSFAVYWMILTLGPLLAGASLVISSYLLSLRWASGFNTMIDDVLRIFPLLLSWLSFWLLYSVVPTTRVPARDALIGSLVAALLFELGKKGFALYITMFPSYQLIYGVLAVIPILFLWVYWTWCIVLLGAEITVTLGDYRKLRQAAREEAESV</sequence>
<protein>
    <recommendedName>
        <fullName evidence="1">UPF0761 membrane protein ESA_04062</fullName>
    </recommendedName>
</protein>
<name>Y4062_CROS8</name>
<organism>
    <name type="scientific">Cronobacter sakazakii (strain ATCC BAA-894)</name>
    <name type="common">Enterobacter sakazakii</name>
    <dbReference type="NCBI Taxonomy" id="290339"/>
    <lineage>
        <taxon>Bacteria</taxon>
        <taxon>Pseudomonadati</taxon>
        <taxon>Pseudomonadota</taxon>
        <taxon>Gammaproteobacteria</taxon>
        <taxon>Enterobacterales</taxon>
        <taxon>Enterobacteriaceae</taxon>
        <taxon>Cronobacter</taxon>
    </lineage>
</organism>
<gene>
    <name type="ordered locus">ESA_04062</name>
</gene>